<proteinExistence type="evidence at transcript level"/>
<sequence>MEASLAALERPRGSASNTVFKSGPLFISSKGLGWTSWKKRWFILTRTSLVFFKNDPGTLPQKGGEVNLTLGGIDLNNSGSVVVREDKKLLTVLFPDGRDGRAFTLKAETFEDLYEWKTALEQALAQAPNAALIMGQNGIFRAETNEAIEGREKRPLKSLVVGRPILLALEDIDGSPSFLEKALQFIEKYGTKIEGILRQSADVEEVERRVQEYEQGKTEFTFDEDPHVVGDCIKHVLRELPSSPVSASCCTALLEAYRIESKEARISSLRSAIAETFPEPNRRLLQRILKMMHTISSHSHENRMNPNAVAACMAPLLLRPLLAGECDLEDDFDGGEDNSAQLLAAANAANNAQAIITVLLEDYGSIFDEENIQRCSISTESHIGNSGPDDSSDDDNNMKNGYHNADNEVEPVTDDDNDRALSGKMSESSGCTGSDLYEYKGFVADDSDIESPRDTNGPRCNSNIRTDHLMRNPFVNSTDQQAGEQIGDDPTKYGVNSCLAHVSESYQQSGTGLNVPTHGNTLAAPGLESPSAKSVNKGTPSSVHAKRATFWGRGSARKISTDGSFDSSGEDELAIQRLETTKNELRQRIAKEARGNAILQASLERRKQALHERRLSLEQDVSRLQEQLQAERDLRAALEVGLSMSSGQFSSHGVDSKTRAELEEIALAEADVARLKQKVAELHHQLNQQRQTHFGSFSDARDTHQYLQNHNPQKRFLQQDFDSTLAYVNHERKQRHEENVLGAEWRNSKGAGSFGVGNSRQPSRKQIPESTNTTDSKISEESGKISVDKLSSIDSPSIPSTSRVLDITEYPRLNHPSAAASAALVELTTRLDFFKERRSQLMEQLQNLDLNYGGSSSQDFIHRPSSPPWN</sequence>
<keyword id="KW-0025">Alternative splicing</keyword>
<keyword id="KW-0175">Coiled coil</keyword>
<keyword id="KW-0343">GTPase activation</keyword>
<keyword id="KW-1185">Reference proteome</keyword>
<feature type="chain" id="PRO_0000422722" description="Rho GTPase-activating protein 7">
    <location>
        <begin position="1"/>
        <end position="870"/>
    </location>
</feature>
<feature type="domain" description="PH" evidence="3">
    <location>
        <begin position="18"/>
        <end position="125"/>
    </location>
</feature>
<feature type="domain" description="Rho-GAP" evidence="4">
    <location>
        <begin position="167"/>
        <end position="367"/>
    </location>
</feature>
<feature type="region of interest" description="Disordered" evidence="5">
    <location>
        <begin position="378"/>
        <end position="432"/>
    </location>
</feature>
<feature type="region of interest" description="Disordered" evidence="5">
    <location>
        <begin position="446"/>
        <end position="465"/>
    </location>
</feature>
<feature type="region of interest" description="Disordered" evidence="5">
    <location>
        <begin position="736"/>
        <end position="793"/>
    </location>
</feature>
<feature type="coiled-coil region" evidence="2">
    <location>
        <begin position="569"/>
        <end position="693"/>
    </location>
</feature>
<feature type="compositionally biased region" description="Acidic residues" evidence="5">
    <location>
        <begin position="407"/>
        <end position="417"/>
    </location>
</feature>
<feature type="compositionally biased region" description="Basic and acidic residues" evidence="5">
    <location>
        <begin position="777"/>
        <end position="787"/>
    </location>
</feature>
<feature type="site" description="Arginine finger; crucial for GTP hydrolysis by stabilizing the transition state" evidence="4">
    <location>
        <position position="198"/>
    </location>
</feature>
<feature type="splice variant" id="VSP_046575" description="In isoform 2." evidence="6">
    <location>
        <begin position="715"/>
        <end position="870"/>
    </location>
</feature>
<feature type="sequence conflict" description="In Ref. 4; BAH19650." evidence="7" ref="4">
    <original>V</original>
    <variation>I</variation>
    <location>
        <position position="245"/>
    </location>
</feature>
<feature type="sequence conflict" description="In Ref. 4; BAH19650." evidence="7" ref="4">
    <original>G</original>
    <variation>E</variation>
    <location>
        <position position="384"/>
    </location>
</feature>
<feature type="sequence conflict" description="In Ref. 4; BAH19650." evidence="7" ref="4">
    <original>K</original>
    <variation>E</variation>
    <location>
        <position position="399"/>
    </location>
</feature>
<feature type="sequence conflict" description="In Ref. 4; BAH19650." evidence="7" ref="4">
    <location>
        <position position="673"/>
    </location>
</feature>
<reference key="1">
    <citation type="journal article" date="2000" name="Nature">
        <title>Sequence and analysis of chromosome 5 of the plant Arabidopsis thaliana.</title>
        <authorList>
            <person name="Tabata S."/>
            <person name="Kaneko T."/>
            <person name="Nakamura Y."/>
            <person name="Kotani H."/>
            <person name="Kato T."/>
            <person name="Asamizu E."/>
            <person name="Miyajima N."/>
            <person name="Sasamoto S."/>
            <person name="Kimura T."/>
            <person name="Hosouchi T."/>
            <person name="Kawashima K."/>
            <person name="Kohara M."/>
            <person name="Matsumoto M."/>
            <person name="Matsuno A."/>
            <person name="Muraki A."/>
            <person name="Nakayama S."/>
            <person name="Nakazaki N."/>
            <person name="Naruo K."/>
            <person name="Okumura S."/>
            <person name="Shinpo S."/>
            <person name="Takeuchi C."/>
            <person name="Wada T."/>
            <person name="Watanabe A."/>
            <person name="Yamada M."/>
            <person name="Yasuda M."/>
            <person name="Sato S."/>
            <person name="de la Bastide M."/>
            <person name="Huang E."/>
            <person name="Spiegel L."/>
            <person name="Gnoj L."/>
            <person name="O'Shaughnessy A."/>
            <person name="Preston R."/>
            <person name="Habermann K."/>
            <person name="Murray J."/>
            <person name="Johnson D."/>
            <person name="Rohlfing T."/>
            <person name="Nelson J."/>
            <person name="Stoneking T."/>
            <person name="Pepin K."/>
            <person name="Spieth J."/>
            <person name="Sekhon M."/>
            <person name="Armstrong J."/>
            <person name="Becker M."/>
            <person name="Belter E."/>
            <person name="Cordum H."/>
            <person name="Cordes M."/>
            <person name="Courtney L."/>
            <person name="Courtney W."/>
            <person name="Dante M."/>
            <person name="Du H."/>
            <person name="Edwards J."/>
            <person name="Fryman J."/>
            <person name="Haakensen B."/>
            <person name="Lamar E."/>
            <person name="Latreille P."/>
            <person name="Leonard S."/>
            <person name="Meyer R."/>
            <person name="Mulvaney E."/>
            <person name="Ozersky P."/>
            <person name="Riley A."/>
            <person name="Strowmatt C."/>
            <person name="Wagner-McPherson C."/>
            <person name="Wollam A."/>
            <person name="Yoakum M."/>
            <person name="Bell M."/>
            <person name="Dedhia N."/>
            <person name="Parnell L."/>
            <person name="Shah R."/>
            <person name="Rodriguez M."/>
            <person name="Hoon See L."/>
            <person name="Vil D."/>
            <person name="Baker J."/>
            <person name="Kirchoff K."/>
            <person name="Toth K."/>
            <person name="King L."/>
            <person name="Bahret A."/>
            <person name="Miller B."/>
            <person name="Marra M.A."/>
            <person name="Martienssen R."/>
            <person name="McCombie W.R."/>
            <person name="Wilson R.K."/>
            <person name="Murphy G."/>
            <person name="Bancroft I."/>
            <person name="Volckaert G."/>
            <person name="Wambutt R."/>
            <person name="Duesterhoeft A."/>
            <person name="Stiekema W."/>
            <person name="Pohl T."/>
            <person name="Entian K.-D."/>
            <person name="Terryn N."/>
            <person name="Hartley N."/>
            <person name="Bent E."/>
            <person name="Johnson S."/>
            <person name="Langham S.-A."/>
            <person name="McCullagh B."/>
            <person name="Robben J."/>
            <person name="Grymonprez B."/>
            <person name="Zimmermann W."/>
            <person name="Ramsperger U."/>
            <person name="Wedler H."/>
            <person name="Balke K."/>
            <person name="Wedler E."/>
            <person name="Peters S."/>
            <person name="van Staveren M."/>
            <person name="Dirkse W."/>
            <person name="Mooijman P."/>
            <person name="Klein Lankhorst R."/>
            <person name="Weitzenegger T."/>
            <person name="Bothe G."/>
            <person name="Rose M."/>
            <person name="Hauf J."/>
            <person name="Berneiser S."/>
            <person name="Hempel S."/>
            <person name="Feldpausch M."/>
            <person name="Lamberth S."/>
            <person name="Villarroel R."/>
            <person name="Gielen J."/>
            <person name="Ardiles W."/>
            <person name="Bents O."/>
            <person name="Lemcke K."/>
            <person name="Kolesov G."/>
            <person name="Mayer K.F.X."/>
            <person name="Rudd S."/>
            <person name="Schoof H."/>
            <person name="Schueller C."/>
            <person name="Zaccaria P."/>
            <person name="Mewes H.-W."/>
            <person name="Bevan M."/>
            <person name="Fransz P.F."/>
        </authorList>
    </citation>
    <scope>NUCLEOTIDE SEQUENCE [LARGE SCALE GENOMIC DNA]</scope>
    <source>
        <strain>cv. Columbia</strain>
    </source>
</reference>
<reference key="2">
    <citation type="journal article" date="2017" name="Plant J.">
        <title>Araport11: a complete reannotation of the Arabidopsis thaliana reference genome.</title>
        <authorList>
            <person name="Cheng C.Y."/>
            <person name="Krishnakumar V."/>
            <person name="Chan A.P."/>
            <person name="Thibaud-Nissen F."/>
            <person name="Schobel S."/>
            <person name="Town C.D."/>
        </authorList>
    </citation>
    <scope>GENOME REANNOTATION</scope>
    <source>
        <strain>cv. Columbia</strain>
    </source>
</reference>
<reference key="3">
    <citation type="journal article" date="2003" name="Science">
        <title>Empirical analysis of transcriptional activity in the Arabidopsis genome.</title>
        <authorList>
            <person name="Yamada K."/>
            <person name="Lim J."/>
            <person name="Dale J.M."/>
            <person name="Chen H."/>
            <person name="Shinn P."/>
            <person name="Palm C.J."/>
            <person name="Southwick A.M."/>
            <person name="Wu H.C."/>
            <person name="Kim C.J."/>
            <person name="Nguyen M."/>
            <person name="Pham P.K."/>
            <person name="Cheuk R.F."/>
            <person name="Karlin-Newmann G."/>
            <person name="Liu S.X."/>
            <person name="Lam B."/>
            <person name="Sakano H."/>
            <person name="Wu T."/>
            <person name="Yu G."/>
            <person name="Miranda M."/>
            <person name="Quach H.L."/>
            <person name="Tripp M."/>
            <person name="Chang C.H."/>
            <person name="Lee J.M."/>
            <person name="Toriumi M.J."/>
            <person name="Chan M.M."/>
            <person name="Tang C.C."/>
            <person name="Onodera C.S."/>
            <person name="Deng J.M."/>
            <person name="Akiyama K."/>
            <person name="Ansari Y."/>
            <person name="Arakawa T."/>
            <person name="Banh J."/>
            <person name="Banno F."/>
            <person name="Bowser L."/>
            <person name="Brooks S.Y."/>
            <person name="Carninci P."/>
            <person name="Chao Q."/>
            <person name="Choy N."/>
            <person name="Enju A."/>
            <person name="Goldsmith A.D."/>
            <person name="Gurjal M."/>
            <person name="Hansen N.F."/>
            <person name="Hayashizaki Y."/>
            <person name="Johnson-Hopson C."/>
            <person name="Hsuan V.W."/>
            <person name="Iida K."/>
            <person name="Karnes M."/>
            <person name="Khan S."/>
            <person name="Koesema E."/>
            <person name="Ishida J."/>
            <person name="Jiang P.X."/>
            <person name="Jones T."/>
            <person name="Kawai J."/>
            <person name="Kamiya A."/>
            <person name="Meyers C."/>
            <person name="Nakajima M."/>
            <person name="Narusaka M."/>
            <person name="Seki M."/>
            <person name="Sakurai T."/>
            <person name="Satou M."/>
            <person name="Tamse R."/>
            <person name="Vaysberg M."/>
            <person name="Wallender E.K."/>
            <person name="Wong C."/>
            <person name="Yamamura Y."/>
            <person name="Yuan S."/>
            <person name="Shinozaki K."/>
            <person name="Davis R.W."/>
            <person name="Theologis A."/>
            <person name="Ecker J.R."/>
        </authorList>
    </citation>
    <scope>NUCLEOTIDE SEQUENCE [LARGE SCALE MRNA] (ISOFORM 1)</scope>
    <source>
        <strain>cv. Columbia</strain>
    </source>
</reference>
<reference key="4">
    <citation type="journal article" date="2009" name="DNA Res.">
        <title>Analysis of multiple occurrences of alternative splicing events in Arabidopsis thaliana using novel sequenced full-length cDNAs.</title>
        <authorList>
            <person name="Iida K."/>
            <person name="Fukami-Kobayashi K."/>
            <person name="Toyoda A."/>
            <person name="Sakaki Y."/>
            <person name="Kobayashi M."/>
            <person name="Seki M."/>
            <person name="Shinozaki K."/>
        </authorList>
    </citation>
    <scope>NUCLEOTIDE SEQUENCE [LARGE SCALE MRNA] (ISOFORMS 1 AND 2)</scope>
    <source>
        <strain>cv. Columbia</strain>
    </source>
</reference>
<protein>
    <recommendedName>
        <fullName>Rho GTPase-activating protein 7</fullName>
    </recommendedName>
    <alternativeName>
        <fullName>Rho-type GTPase-activating protein 7</fullName>
    </alternativeName>
</protein>
<name>RGAP7_ARATH</name>
<comment type="function">
    <text evidence="1">Acts as a GTPase activator for the Rac-type GTPase by converting it to an inactive GDP-bound state.</text>
</comment>
<comment type="alternative products">
    <event type="alternative splicing"/>
    <isoform>
        <id>Q8RWQ4-1</id>
        <name>1</name>
        <sequence type="displayed"/>
    </isoform>
    <isoform>
        <id>Q8RWQ4-2</id>
        <name>2</name>
        <sequence type="described" ref="VSP_046575"/>
    </isoform>
</comment>
<organism>
    <name type="scientific">Arabidopsis thaliana</name>
    <name type="common">Mouse-ear cress</name>
    <dbReference type="NCBI Taxonomy" id="3702"/>
    <lineage>
        <taxon>Eukaryota</taxon>
        <taxon>Viridiplantae</taxon>
        <taxon>Streptophyta</taxon>
        <taxon>Embryophyta</taxon>
        <taxon>Tracheophyta</taxon>
        <taxon>Spermatophyta</taxon>
        <taxon>Magnoliopsida</taxon>
        <taxon>eudicotyledons</taxon>
        <taxon>Gunneridae</taxon>
        <taxon>Pentapetalae</taxon>
        <taxon>rosids</taxon>
        <taxon>malvids</taxon>
        <taxon>Brassicales</taxon>
        <taxon>Brassicaceae</taxon>
        <taxon>Camelineae</taxon>
        <taxon>Arabidopsis</taxon>
    </lineage>
</organism>
<dbReference type="EMBL" id="AF296837">
    <property type="status" value="NOT_ANNOTATED_CDS"/>
    <property type="molecule type" value="Genomic_DNA"/>
</dbReference>
<dbReference type="EMBL" id="CP002688">
    <property type="protein sequence ID" value="AED92695.1"/>
    <property type="molecule type" value="Genomic_DNA"/>
</dbReference>
<dbReference type="EMBL" id="CP002688">
    <property type="protein sequence ID" value="AED92696.1"/>
    <property type="molecule type" value="Genomic_DNA"/>
</dbReference>
<dbReference type="EMBL" id="CP002688">
    <property type="protein sequence ID" value="AED92698.1"/>
    <property type="molecule type" value="Genomic_DNA"/>
</dbReference>
<dbReference type="EMBL" id="AY091776">
    <property type="protein sequence ID" value="AAM10324.1"/>
    <property type="molecule type" value="mRNA"/>
</dbReference>
<dbReference type="EMBL" id="BT002224">
    <property type="protein sequence ID" value="AAN72235.1"/>
    <property type="molecule type" value="mRNA"/>
</dbReference>
<dbReference type="EMBL" id="AK316947">
    <property type="protein sequence ID" value="BAH19650.1"/>
    <property type="molecule type" value="mRNA"/>
</dbReference>
<dbReference type="EMBL" id="AK317427">
    <property type="protein sequence ID" value="BAH20095.1"/>
    <property type="molecule type" value="mRNA"/>
</dbReference>
<dbReference type="RefSeq" id="NP_001031905.1">
    <molecule id="Q8RWQ4-2"/>
    <property type="nucleotide sequence ID" value="NM_001036828.2"/>
</dbReference>
<dbReference type="RefSeq" id="NP_197440.2">
    <molecule id="Q8RWQ4-1"/>
    <property type="nucleotide sequence ID" value="NM_121944.3"/>
</dbReference>
<dbReference type="RefSeq" id="NP_851042.2">
    <molecule id="Q8RWQ4-1"/>
    <property type="nucleotide sequence ID" value="NM_180711.2"/>
</dbReference>
<dbReference type="SMR" id="Q8RWQ4"/>
<dbReference type="FunCoup" id="Q8RWQ4">
    <property type="interactions" value="447"/>
</dbReference>
<dbReference type="STRING" id="3702.Q8RWQ4"/>
<dbReference type="iPTMnet" id="Q8RWQ4"/>
<dbReference type="PaxDb" id="3702-AT5G19390.2"/>
<dbReference type="ProteomicsDB" id="236910">
    <molecule id="Q8RWQ4-1"/>
</dbReference>
<dbReference type="EnsemblPlants" id="AT5G19390.1">
    <molecule id="Q8RWQ4-1"/>
    <property type="protein sequence ID" value="AT5G19390.1"/>
    <property type="gene ID" value="AT5G19390"/>
</dbReference>
<dbReference type="EnsemblPlants" id="AT5G19390.2">
    <molecule id="Q8RWQ4-1"/>
    <property type="protein sequence ID" value="AT5G19390.2"/>
    <property type="gene ID" value="AT5G19390"/>
</dbReference>
<dbReference type="EnsemblPlants" id="AT5G19390.4">
    <molecule id="Q8RWQ4-2"/>
    <property type="protein sequence ID" value="AT5G19390.4"/>
    <property type="gene ID" value="AT5G19390"/>
</dbReference>
<dbReference type="GeneID" id="832059"/>
<dbReference type="Gramene" id="AT5G19390.1">
    <molecule id="Q8RWQ4-1"/>
    <property type="protein sequence ID" value="AT5G19390.1"/>
    <property type="gene ID" value="AT5G19390"/>
</dbReference>
<dbReference type="Gramene" id="AT5G19390.2">
    <molecule id="Q8RWQ4-1"/>
    <property type="protein sequence ID" value="AT5G19390.2"/>
    <property type="gene ID" value="AT5G19390"/>
</dbReference>
<dbReference type="Gramene" id="AT5G19390.4">
    <molecule id="Q8RWQ4-2"/>
    <property type="protein sequence ID" value="AT5G19390.4"/>
    <property type="gene ID" value="AT5G19390"/>
</dbReference>
<dbReference type="KEGG" id="ath:AT5G19390"/>
<dbReference type="Araport" id="AT5G19390"/>
<dbReference type="TAIR" id="AT5G19390">
    <property type="gene designation" value="PHGAP2"/>
</dbReference>
<dbReference type="eggNOG" id="KOG4271">
    <property type="taxonomic scope" value="Eukaryota"/>
</dbReference>
<dbReference type="HOGENOM" id="CLU_011283_1_0_1"/>
<dbReference type="InParanoid" id="Q8RWQ4"/>
<dbReference type="OMA" id="HRASTYD"/>
<dbReference type="PhylomeDB" id="Q8RWQ4"/>
<dbReference type="PRO" id="PR:Q8RWQ4"/>
<dbReference type="Proteomes" id="UP000006548">
    <property type="component" value="Chromosome 5"/>
</dbReference>
<dbReference type="ExpressionAtlas" id="Q8RWQ4">
    <property type="expression patterns" value="baseline and differential"/>
</dbReference>
<dbReference type="GO" id="GO:0009535">
    <property type="term" value="C:chloroplast thylakoid membrane"/>
    <property type="evidence" value="ECO:0007005"/>
    <property type="project" value="TAIR"/>
</dbReference>
<dbReference type="GO" id="GO:0005737">
    <property type="term" value="C:cytoplasm"/>
    <property type="evidence" value="ECO:0000314"/>
    <property type="project" value="TAIR"/>
</dbReference>
<dbReference type="GO" id="GO:0005886">
    <property type="term" value="C:plasma membrane"/>
    <property type="evidence" value="ECO:0000314"/>
    <property type="project" value="TAIR"/>
</dbReference>
<dbReference type="GO" id="GO:0005096">
    <property type="term" value="F:GTPase activator activity"/>
    <property type="evidence" value="ECO:0000250"/>
    <property type="project" value="TAIR"/>
</dbReference>
<dbReference type="GO" id="GO:0009920">
    <property type="term" value="P:cell plate formation involved in plant-type cell wall biogenesis"/>
    <property type="evidence" value="ECO:0000316"/>
    <property type="project" value="TAIR"/>
</dbReference>
<dbReference type="GO" id="GO:0007165">
    <property type="term" value="P:signal transduction"/>
    <property type="evidence" value="ECO:0007669"/>
    <property type="project" value="InterPro"/>
</dbReference>
<dbReference type="CDD" id="cd00821">
    <property type="entry name" value="PH"/>
    <property type="match status" value="1"/>
</dbReference>
<dbReference type="CDD" id="cd00159">
    <property type="entry name" value="RhoGAP"/>
    <property type="match status" value="1"/>
</dbReference>
<dbReference type="FunFam" id="2.30.29.30:FF:000302">
    <property type="entry name" value="Rho GTPase-activating protein 7"/>
    <property type="match status" value="1"/>
</dbReference>
<dbReference type="FunFam" id="1.10.555.10:FF:000052">
    <property type="entry name" value="Rho GTPase-activating protein REN1"/>
    <property type="match status" value="1"/>
</dbReference>
<dbReference type="Gene3D" id="2.30.29.30">
    <property type="entry name" value="Pleckstrin-homology domain (PH domain)/Phosphotyrosine-binding domain (PTB)"/>
    <property type="match status" value="1"/>
</dbReference>
<dbReference type="Gene3D" id="1.10.555.10">
    <property type="entry name" value="Rho GTPase activation protein"/>
    <property type="match status" value="1"/>
</dbReference>
<dbReference type="InterPro" id="IPR025757">
    <property type="entry name" value="MIP1_Leuzipper"/>
</dbReference>
<dbReference type="InterPro" id="IPR011993">
    <property type="entry name" value="PH-like_dom_sf"/>
</dbReference>
<dbReference type="InterPro" id="IPR001849">
    <property type="entry name" value="PH_domain"/>
</dbReference>
<dbReference type="InterPro" id="IPR052799">
    <property type="entry name" value="Rho_GAP_Regulators"/>
</dbReference>
<dbReference type="InterPro" id="IPR008936">
    <property type="entry name" value="Rho_GTPase_activation_prot"/>
</dbReference>
<dbReference type="InterPro" id="IPR000198">
    <property type="entry name" value="RhoGAP_dom"/>
</dbReference>
<dbReference type="PANTHER" id="PTHR46265">
    <property type="entry name" value="RHO GTPASE-ACTIVATING PROTEIN 7"/>
    <property type="match status" value="1"/>
</dbReference>
<dbReference type="PANTHER" id="PTHR46265:SF2">
    <property type="entry name" value="RHO GTPASE-ACTIVATING PROTEIN 7"/>
    <property type="match status" value="1"/>
</dbReference>
<dbReference type="Pfam" id="PF14389">
    <property type="entry name" value="Lzipper-MIP1"/>
    <property type="match status" value="1"/>
</dbReference>
<dbReference type="Pfam" id="PF00169">
    <property type="entry name" value="PH"/>
    <property type="match status" value="1"/>
</dbReference>
<dbReference type="Pfam" id="PF00620">
    <property type="entry name" value="RhoGAP"/>
    <property type="match status" value="1"/>
</dbReference>
<dbReference type="SMART" id="SM00233">
    <property type="entry name" value="PH"/>
    <property type="match status" value="1"/>
</dbReference>
<dbReference type="SMART" id="SM00324">
    <property type="entry name" value="RhoGAP"/>
    <property type="match status" value="1"/>
</dbReference>
<dbReference type="SUPFAM" id="SSF48350">
    <property type="entry name" value="GTPase activation domain, GAP"/>
    <property type="match status" value="1"/>
</dbReference>
<dbReference type="SUPFAM" id="SSF50729">
    <property type="entry name" value="PH domain-like"/>
    <property type="match status" value="1"/>
</dbReference>
<dbReference type="PROSITE" id="PS50003">
    <property type="entry name" value="PH_DOMAIN"/>
    <property type="match status" value="1"/>
</dbReference>
<dbReference type="PROSITE" id="PS50238">
    <property type="entry name" value="RHOGAP"/>
    <property type="match status" value="1"/>
</dbReference>
<accession>Q8RWQ4</accession>
<accession>B9DFY3</accession>
<accession>F4K143</accession>
<accession>Q3E9B9</accession>
<evidence type="ECO:0000250" key="1"/>
<evidence type="ECO:0000255" key="2"/>
<evidence type="ECO:0000255" key="3">
    <source>
        <dbReference type="PROSITE-ProRule" id="PRU00145"/>
    </source>
</evidence>
<evidence type="ECO:0000255" key="4">
    <source>
        <dbReference type="PROSITE-ProRule" id="PRU00172"/>
    </source>
</evidence>
<evidence type="ECO:0000256" key="5">
    <source>
        <dbReference type="SAM" id="MobiDB-lite"/>
    </source>
</evidence>
<evidence type="ECO:0000303" key="6">
    <source>
    </source>
</evidence>
<evidence type="ECO:0000305" key="7"/>
<gene>
    <name type="primary">ROPGAP7</name>
    <name type="ordered locus">At5g19390</name>
    <name type="ORF">F7K24.140</name>
</gene>